<comment type="function">
    <text evidence="1">Catalyzes the ATP-dependent phosphorylation of N-acetyl-L-glutamate.</text>
</comment>
<comment type="catalytic activity">
    <reaction evidence="1">
        <text>N-acetyl-L-glutamate + ATP = N-acetyl-L-glutamyl 5-phosphate + ADP</text>
        <dbReference type="Rhea" id="RHEA:14629"/>
        <dbReference type="ChEBI" id="CHEBI:30616"/>
        <dbReference type="ChEBI" id="CHEBI:44337"/>
        <dbReference type="ChEBI" id="CHEBI:57936"/>
        <dbReference type="ChEBI" id="CHEBI:456216"/>
        <dbReference type="EC" id="2.7.2.8"/>
    </reaction>
</comment>
<comment type="pathway">
    <text evidence="1">Amino-acid biosynthesis; L-arginine biosynthesis; N(2)-acetyl-L-ornithine from L-glutamate: step 2/4.</text>
</comment>
<comment type="subcellular location">
    <subcellularLocation>
        <location evidence="1">Cytoplasm</location>
    </subcellularLocation>
</comment>
<comment type="similarity">
    <text evidence="1">Belongs to the acetylglutamate kinase family. ArgB subfamily.</text>
</comment>
<keyword id="KW-0028">Amino-acid biosynthesis</keyword>
<keyword id="KW-0055">Arginine biosynthesis</keyword>
<keyword id="KW-0067">ATP-binding</keyword>
<keyword id="KW-0963">Cytoplasm</keyword>
<keyword id="KW-0418">Kinase</keyword>
<keyword id="KW-0547">Nucleotide-binding</keyword>
<keyword id="KW-1185">Reference proteome</keyword>
<keyword id="KW-0808">Transferase</keyword>
<reference key="1">
    <citation type="journal article" date="2009" name="Environ. Microbiol.">
        <title>The genome of Polaromonas naphthalenivorans strain CJ2, isolated from coal tar-contaminated sediment, reveals physiological and metabolic versatility and evolution through extensive horizontal gene transfer.</title>
        <authorList>
            <person name="Yagi J.M."/>
            <person name="Sims D."/>
            <person name="Brettin T."/>
            <person name="Bruce D."/>
            <person name="Madsen E.L."/>
        </authorList>
    </citation>
    <scope>NUCLEOTIDE SEQUENCE [LARGE SCALE GENOMIC DNA]</scope>
    <source>
        <strain>CJ2</strain>
    </source>
</reference>
<name>ARGB_POLNA</name>
<sequence>MTHSSVNASSDPDLSHIGPRDKAEILAQALPYIRKFHGKTLVIKYGGNAMTDPALQADFAEDVVLLKLVGMNPVVVHGGGPQIETALNRLGKKGHFIQGMRVTDDETMEVVEWVLAGQVQQDIVGLINQAGGKAVGLTGRDGGMIRAKKLTMLDKDDASKEHDIGFVGEIVSIDPSVVKALQDDAFIPVISPIGFGENNESYNINADVVAGKLATVLKAEKLVLLTNIPGVLNKAGELLTDLTAREIDELFADGTISGGMLPKIEGALDAAKSGVNAVHIIDGRVPHAMLLEILTDKAYGTMIRSH</sequence>
<accession>A1VSZ8</accession>
<evidence type="ECO:0000255" key="1">
    <source>
        <dbReference type="HAMAP-Rule" id="MF_00082"/>
    </source>
</evidence>
<protein>
    <recommendedName>
        <fullName evidence="1">Acetylglutamate kinase</fullName>
        <ecNumber evidence="1">2.7.2.8</ecNumber>
    </recommendedName>
    <alternativeName>
        <fullName evidence="1">N-acetyl-L-glutamate 5-phosphotransferase</fullName>
    </alternativeName>
    <alternativeName>
        <fullName evidence="1">NAG kinase</fullName>
        <shortName evidence="1">NAGK</shortName>
    </alternativeName>
</protein>
<organism>
    <name type="scientific">Polaromonas naphthalenivorans (strain CJ2)</name>
    <dbReference type="NCBI Taxonomy" id="365044"/>
    <lineage>
        <taxon>Bacteria</taxon>
        <taxon>Pseudomonadati</taxon>
        <taxon>Pseudomonadota</taxon>
        <taxon>Betaproteobacteria</taxon>
        <taxon>Burkholderiales</taxon>
        <taxon>Comamonadaceae</taxon>
        <taxon>Polaromonas</taxon>
    </lineage>
</organism>
<feature type="chain" id="PRO_1000010523" description="Acetylglutamate kinase">
    <location>
        <begin position="1"/>
        <end position="306"/>
    </location>
</feature>
<feature type="binding site" evidence="1">
    <location>
        <begin position="79"/>
        <end position="80"/>
    </location>
    <ligand>
        <name>substrate</name>
    </ligand>
</feature>
<feature type="binding site" evidence="1">
    <location>
        <position position="101"/>
    </location>
    <ligand>
        <name>substrate</name>
    </ligand>
</feature>
<feature type="binding site" evidence="1">
    <location>
        <position position="203"/>
    </location>
    <ligand>
        <name>substrate</name>
    </ligand>
</feature>
<feature type="site" description="Transition state stabilizer" evidence="1">
    <location>
        <position position="44"/>
    </location>
</feature>
<feature type="site" description="Transition state stabilizer" evidence="1">
    <location>
        <position position="263"/>
    </location>
</feature>
<dbReference type="EC" id="2.7.2.8" evidence="1"/>
<dbReference type="EMBL" id="CP000529">
    <property type="protein sequence ID" value="ABM38776.1"/>
    <property type="molecule type" value="Genomic_DNA"/>
</dbReference>
<dbReference type="RefSeq" id="WP_011802847.1">
    <property type="nucleotide sequence ID" value="NC_008781.1"/>
</dbReference>
<dbReference type="SMR" id="A1VSZ8"/>
<dbReference type="STRING" id="365044.Pnap_3479"/>
<dbReference type="KEGG" id="pna:Pnap_3479"/>
<dbReference type="eggNOG" id="COG0548">
    <property type="taxonomic scope" value="Bacteria"/>
</dbReference>
<dbReference type="HOGENOM" id="CLU_053680_0_0_4"/>
<dbReference type="OrthoDB" id="9803155at2"/>
<dbReference type="UniPathway" id="UPA00068">
    <property type="reaction ID" value="UER00107"/>
</dbReference>
<dbReference type="Proteomes" id="UP000000644">
    <property type="component" value="Chromosome"/>
</dbReference>
<dbReference type="GO" id="GO:0005737">
    <property type="term" value="C:cytoplasm"/>
    <property type="evidence" value="ECO:0007669"/>
    <property type="project" value="UniProtKB-SubCell"/>
</dbReference>
<dbReference type="GO" id="GO:0003991">
    <property type="term" value="F:acetylglutamate kinase activity"/>
    <property type="evidence" value="ECO:0007669"/>
    <property type="project" value="UniProtKB-UniRule"/>
</dbReference>
<dbReference type="GO" id="GO:0005524">
    <property type="term" value="F:ATP binding"/>
    <property type="evidence" value="ECO:0007669"/>
    <property type="project" value="UniProtKB-UniRule"/>
</dbReference>
<dbReference type="GO" id="GO:0042450">
    <property type="term" value="P:arginine biosynthetic process via ornithine"/>
    <property type="evidence" value="ECO:0007669"/>
    <property type="project" value="UniProtKB-UniRule"/>
</dbReference>
<dbReference type="GO" id="GO:0006526">
    <property type="term" value="P:L-arginine biosynthetic process"/>
    <property type="evidence" value="ECO:0007669"/>
    <property type="project" value="UniProtKB-UniPathway"/>
</dbReference>
<dbReference type="CDD" id="cd04250">
    <property type="entry name" value="AAK_NAGK-C"/>
    <property type="match status" value="1"/>
</dbReference>
<dbReference type="FunFam" id="3.40.1160.10:FF:000004">
    <property type="entry name" value="Acetylglutamate kinase"/>
    <property type="match status" value="1"/>
</dbReference>
<dbReference type="Gene3D" id="3.40.1160.10">
    <property type="entry name" value="Acetylglutamate kinase-like"/>
    <property type="match status" value="1"/>
</dbReference>
<dbReference type="HAMAP" id="MF_00082">
    <property type="entry name" value="ArgB"/>
    <property type="match status" value="1"/>
</dbReference>
<dbReference type="InterPro" id="IPR036393">
    <property type="entry name" value="AceGlu_kinase-like_sf"/>
</dbReference>
<dbReference type="InterPro" id="IPR004662">
    <property type="entry name" value="AcgluKinase_fam"/>
</dbReference>
<dbReference type="InterPro" id="IPR037528">
    <property type="entry name" value="ArgB"/>
</dbReference>
<dbReference type="InterPro" id="IPR001048">
    <property type="entry name" value="Asp/Glu/Uridylate_kinase"/>
</dbReference>
<dbReference type="InterPro" id="IPR001057">
    <property type="entry name" value="Glu/AcGlu_kinase"/>
</dbReference>
<dbReference type="InterPro" id="IPR041727">
    <property type="entry name" value="NAGK-C"/>
</dbReference>
<dbReference type="NCBIfam" id="TIGR00761">
    <property type="entry name" value="argB"/>
    <property type="match status" value="1"/>
</dbReference>
<dbReference type="PANTHER" id="PTHR23342">
    <property type="entry name" value="N-ACETYLGLUTAMATE SYNTHASE"/>
    <property type="match status" value="1"/>
</dbReference>
<dbReference type="PANTHER" id="PTHR23342:SF0">
    <property type="entry name" value="N-ACETYLGLUTAMATE SYNTHASE, MITOCHONDRIAL"/>
    <property type="match status" value="1"/>
</dbReference>
<dbReference type="Pfam" id="PF00696">
    <property type="entry name" value="AA_kinase"/>
    <property type="match status" value="1"/>
</dbReference>
<dbReference type="PIRSF" id="PIRSF000728">
    <property type="entry name" value="NAGK"/>
    <property type="match status" value="1"/>
</dbReference>
<dbReference type="PRINTS" id="PR00474">
    <property type="entry name" value="GLU5KINASE"/>
</dbReference>
<dbReference type="SUPFAM" id="SSF53633">
    <property type="entry name" value="Carbamate kinase-like"/>
    <property type="match status" value="1"/>
</dbReference>
<gene>
    <name evidence="1" type="primary">argB</name>
    <name type="ordered locus">Pnap_3479</name>
</gene>
<proteinExistence type="inferred from homology"/>